<proteinExistence type="inferred from homology"/>
<name>GATD_NANEQ</name>
<dbReference type="EC" id="6.3.5.-"/>
<dbReference type="EMBL" id="AE017199">
    <property type="protein sequence ID" value="AAR38981.1"/>
    <property type="molecule type" value="Genomic_DNA"/>
</dbReference>
<dbReference type="SMR" id="P61401"/>
<dbReference type="STRING" id="228908.NEQ126"/>
<dbReference type="EnsemblBacteria" id="AAR38981">
    <property type="protein sequence ID" value="AAR38981"/>
    <property type="gene ID" value="NEQ126"/>
</dbReference>
<dbReference type="KEGG" id="neq:NEQ126"/>
<dbReference type="PATRIC" id="fig|228908.8.peg.131"/>
<dbReference type="HOGENOM" id="CLU_019134_2_1_2"/>
<dbReference type="Proteomes" id="UP000000578">
    <property type="component" value="Chromosome"/>
</dbReference>
<dbReference type="GO" id="GO:0004067">
    <property type="term" value="F:asparaginase activity"/>
    <property type="evidence" value="ECO:0007669"/>
    <property type="project" value="InterPro"/>
</dbReference>
<dbReference type="GO" id="GO:0005524">
    <property type="term" value="F:ATP binding"/>
    <property type="evidence" value="ECO:0007669"/>
    <property type="project" value="UniProtKB-KW"/>
</dbReference>
<dbReference type="GO" id="GO:0050567">
    <property type="term" value="F:glutaminyl-tRNA synthase (glutamine-hydrolyzing) activity"/>
    <property type="evidence" value="ECO:0007669"/>
    <property type="project" value="UniProtKB-UniRule"/>
</dbReference>
<dbReference type="GO" id="GO:0006520">
    <property type="term" value="P:amino acid metabolic process"/>
    <property type="evidence" value="ECO:0007669"/>
    <property type="project" value="InterPro"/>
</dbReference>
<dbReference type="GO" id="GO:0006450">
    <property type="term" value="P:regulation of translational fidelity"/>
    <property type="evidence" value="ECO:0007669"/>
    <property type="project" value="InterPro"/>
</dbReference>
<dbReference type="GO" id="GO:0006412">
    <property type="term" value="P:translation"/>
    <property type="evidence" value="ECO:0007669"/>
    <property type="project" value="UniProtKB-UniRule"/>
</dbReference>
<dbReference type="CDD" id="cd08962">
    <property type="entry name" value="GatD"/>
    <property type="match status" value="1"/>
</dbReference>
<dbReference type="Gene3D" id="2.30.30.520">
    <property type="match status" value="1"/>
</dbReference>
<dbReference type="Gene3D" id="3.40.50.40">
    <property type="match status" value="1"/>
</dbReference>
<dbReference type="Gene3D" id="3.40.50.1170">
    <property type="entry name" value="L-asparaginase, N-terminal domain"/>
    <property type="match status" value="1"/>
</dbReference>
<dbReference type="HAMAP" id="MF_00586">
    <property type="entry name" value="GatD"/>
    <property type="match status" value="1"/>
</dbReference>
<dbReference type="InterPro" id="IPR006033">
    <property type="entry name" value="AsnA_fam"/>
</dbReference>
<dbReference type="InterPro" id="IPR036152">
    <property type="entry name" value="Asp/glu_Ase-like_sf"/>
</dbReference>
<dbReference type="InterPro" id="IPR006034">
    <property type="entry name" value="Asparaginase/glutaminase-like"/>
</dbReference>
<dbReference type="InterPro" id="IPR027475">
    <property type="entry name" value="Asparaginase/glutaminase_AS2"/>
</dbReference>
<dbReference type="InterPro" id="IPR040919">
    <property type="entry name" value="Asparaginase_C"/>
</dbReference>
<dbReference type="InterPro" id="IPR011878">
    <property type="entry name" value="GatD"/>
</dbReference>
<dbReference type="InterPro" id="IPR037222">
    <property type="entry name" value="GatD_N_sf"/>
</dbReference>
<dbReference type="InterPro" id="IPR027473">
    <property type="entry name" value="L-asparaginase_C"/>
</dbReference>
<dbReference type="InterPro" id="IPR027474">
    <property type="entry name" value="L-asparaginase_N"/>
</dbReference>
<dbReference type="InterPro" id="IPR037152">
    <property type="entry name" value="L-asparaginase_N_sf"/>
</dbReference>
<dbReference type="NCBIfam" id="TIGR00519">
    <property type="entry name" value="asnASE_I"/>
    <property type="match status" value="1"/>
</dbReference>
<dbReference type="NCBIfam" id="TIGR02153">
    <property type="entry name" value="gatD_arch"/>
    <property type="match status" value="1"/>
</dbReference>
<dbReference type="NCBIfam" id="NF003217">
    <property type="entry name" value="PRK04183.1"/>
    <property type="match status" value="1"/>
</dbReference>
<dbReference type="PANTHER" id="PTHR11707:SF28">
    <property type="entry name" value="60 KDA LYSOPHOSPHOLIPASE"/>
    <property type="match status" value="1"/>
</dbReference>
<dbReference type="PANTHER" id="PTHR11707">
    <property type="entry name" value="L-ASPARAGINASE"/>
    <property type="match status" value="1"/>
</dbReference>
<dbReference type="Pfam" id="PF00710">
    <property type="entry name" value="Asparaginase"/>
    <property type="match status" value="1"/>
</dbReference>
<dbReference type="Pfam" id="PF17763">
    <property type="entry name" value="Asparaginase_C"/>
    <property type="match status" value="1"/>
</dbReference>
<dbReference type="PIRSF" id="PIRSF500175">
    <property type="entry name" value="Glu_ADT_D"/>
    <property type="match status" value="1"/>
</dbReference>
<dbReference type="PIRSF" id="PIRSF001220">
    <property type="entry name" value="L-ASNase_gatD"/>
    <property type="match status" value="1"/>
</dbReference>
<dbReference type="PRINTS" id="PR00139">
    <property type="entry name" value="ASNGLNASE"/>
</dbReference>
<dbReference type="SFLD" id="SFLDS00057">
    <property type="entry name" value="Glutaminase/Asparaginase"/>
    <property type="match status" value="1"/>
</dbReference>
<dbReference type="SMART" id="SM00870">
    <property type="entry name" value="Asparaginase"/>
    <property type="match status" value="1"/>
</dbReference>
<dbReference type="SUPFAM" id="SSF141300">
    <property type="entry name" value="GatD N-terminal domain-like"/>
    <property type="match status" value="1"/>
</dbReference>
<dbReference type="SUPFAM" id="SSF53774">
    <property type="entry name" value="Glutaminase/Asparaginase"/>
    <property type="match status" value="1"/>
</dbReference>
<dbReference type="PROSITE" id="PS00917">
    <property type="entry name" value="ASN_GLN_ASE_2"/>
    <property type="match status" value="1"/>
</dbReference>
<dbReference type="PROSITE" id="PS51732">
    <property type="entry name" value="ASN_GLN_ASE_3"/>
    <property type="match status" value="1"/>
</dbReference>
<feature type="chain" id="PRO_0000140057" description="Glutamyl-tRNA(Gln) amidotransferase subunit D">
    <location>
        <begin position="1"/>
        <end position="392"/>
    </location>
</feature>
<feature type="domain" description="Asparaginase/glutaminase" evidence="2">
    <location>
        <begin position="68"/>
        <end position="391"/>
    </location>
</feature>
<feature type="active site" evidence="3">
    <location>
        <position position="78"/>
    </location>
</feature>
<feature type="active site" evidence="3">
    <location>
        <position position="152"/>
    </location>
</feature>
<feature type="active site" evidence="3">
    <location>
        <position position="153"/>
    </location>
</feature>
<feature type="active site" evidence="3">
    <location>
        <position position="229"/>
    </location>
</feature>
<sequence>MVGELYRFITDFGVIEGYIIKEEPNYYLIKLKNGYNIGIKKSQIKEMENLNEKIKVGQFPKRKPKGIGNLGFIYTGGTIGSKVDYLTGGVSAIMDIEELLAIADLPYDIKIIDSPFVKFSEDLNPKDWVEIVKSIERTYKKGAEGIIVAHGTDTMHFSSAYAYYALENPIPIAFTGAQRSSDRASTDAVINLFASSIYANSNIGEVAIVMHETINDDTAIAIRGISARKMHSTRRDAFKSINEEPLARIYYPSGKLEIINKKYRKRSDKEMVAKPYLDTKGALIWVYPGFDPSILEYYRNYRGIIIAGTGMGHTSKELIPMLKELSKDLFIGITTQCIYGITHPYVYSRGRELSKFATYLQGTPEKNYVKLLYVLGKESDLDGIKKEMKRLP</sequence>
<protein>
    <recommendedName>
        <fullName>Glutamyl-tRNA(Gln) amidotransferase subunit D</fullName>
        <shortName>Glu-ADT subunit D</shortName>
        <ecNumber>6.3.5.-</ecNumber>
    </recommendedName>
</protein>
<keyword id="KW-0067">ATP-binding</keyword>
<keyword id="KW-0436">Ligase</keyword>
<keyword id="KW-0547">Nucleotide-binding</keyword>
<keyword id="KW-0648">Protein biosynthesis</keyword>
<keyword id="KW-1185">Reference proteome</keyword>
<gene>
    <name type="primary">gatD</name>
    <name type="ordered locus">NEQ126</name>
</gene>
<organism>
    <name type="scientific">Nanoarchaeum equitans (strain Kin4-M)</name>
    <dbReference type="NCBI Taxonomy" id="228908"/>
    <lineage>
        <taxon>Archaea</taxon>
        <taxon>Nanobdellota</taxon>
        <taxon>Candidatus Nanoarchaeia</taxon>
        <taxon>Nanoarchaeales</taxon>
        <taxon>Nanoarchaeaceae</taxon>
        <taxon>Nanoarchaeum</taxon>
    </lineage>
</organism>
<accession>P61401</accession>
<evidence type="ECO:0000250" key="1"/>
<evidence type="ECO:0000255" key="2">
    <source>
        <dbReference type="PROSITE-ProRule" id="PRU01068"/>
    </source>
</evidence>
<evidence type="ECO:0000255" key="3">
    <source>
        <dbReference type="PROSITE-ProRule" id="PRU10100"/>
    </source>
</evidence>
<evidence type="ECO:0000305" key="4"/>
<comment type="function">
    <text evidence="1">Allows the formation of correctly charged Gln-tRNA(Gln) through the transamidation of misacylated Glu-tRNA(Gln) in organisms which lack glutaminyl-tRNA synthetase. The reaction takes place in the presence of glutamine and ATP through an activated gamma-phospho-Glu-tRNA(Gln). The GatDE system is specific for glutamate and does not act on aspartate (By similarity).</text>
</comment>
<comment type="catalytic activity">
    <reaction>
        <text>L-glutamyl-tRNA(Gln) + L-glutamine + ATP + H2O = L-glutaminyl-tRNA(Gln) + L-glutamate + ADP + phosphate + H(+)</text>
        <dbReference type="Rhea" id="RHEA:17521"/>
        <dbReference type="Rhea" id="RHEA-COMP:9681"/>
        <dbReference type="Rhea" id="RHEA-COMP:9684"/>
        <dbReference type="ChEBI" id="CHEBI:15377"/>
        <dbReference type="ChEBI" id="CHEBI:15378"/>
        <dbReference type="ChEBI" id="CHEBI:29985"/>
        <dbReference type="ChEBI" id="CHEBI:30616"/>
        <dbReference type="ChEBI" id="CHEBI:43474"/>
        <dbReference type="ChEBI" id="CHEBI:58359"/>
        <dbReference type="ChEBI" id="CHEBI:78520"/>
        <dbReference type="ChEBI" id="CHEBI:78521"/>
        <dbReference type="ChEBI" id="CHEBI:456216"/>
    </reaction>
</comment>
<comment type="subunit">
    <text evidence="1">Heterodimer of GatD and GatE.</text>
</comment>
<comment type="similarity">
    <text evidence="4">Belongs to the asparaginase 1 family. GatD subfamily.</text>
</comment>
<reference key="1">
    <citation type="journal article" date="2003" name="Proc. Natl. Acad. Sci. U.S.A.">
        <title>The genome of Nanoarchaeum equitans: insights into early archaeal evolution and derived parasitism.</title>
        <authorList>
            <person name="Waters E."/>
            <person name="Hohn M.J."/>
            <person name="Ahel I."/>
            <person name="Graham D.E."/>
            <person name="Adams M.D."/>
            <person name="Barnstead M."/>
            <person name="Beeson K.Y."/>
            <person name="Bibbs L."/>
            <person name="Bolanos R."/>
            <person name="Keller M."/>
            <person name="Kretz K."/>
            <person name="Lin X."/>
            <person name="Mathur E."/>
            <person name="Ni J."/>
            <person name="Podar M."/>
            <person name="Richardson T."/>
            <person name="Sutton G.G."/>
            <person name="Simon M."/>
            <person name="Soell D."/>
            <person name="Stetter K.O."/>
            <person name="Short J.M."/>
            <person name="Noorderwier M."/>
        </authorList>
    </citation>
    <scope>NUCLEOTIDE SEQUENCE [LARGE SCALE GENOMIC DNA]</scope>
    <source>
        <strain>Kin4-M</strain>
    </source>
</reference>